<dbReference type="EMBL" id="CH408047">
    <property type="protein sequence ID" value="EDV11560.1"/>
    <property type="molecule type" value="Genomic_DNA"/>
</dbReference>
<dbReference type="HOGENOM" id="CLU_035453_0_0_1"/>
<dbReference type="OrthoDB" id="36478at4893"/>
<dbReference type="Proteomes" id="UP000008335">
    <property type="component" value="Unassembled WGS sequence"/>
</dbReference>
<dbReference type="GO" id="GO:0005739">
    <property type="term" value="C:mitochondrion"/>
    <property type="evidence" value="ECO:0007669"/>
    <property type="project" value="UniProtKB-SubCell"/>
</dbReference>
<dbReference type="GO" id="GO:0045182">
    <property type="term" value="F:translation regulator activity"/>
    <property type="evidence" value="ECO:0007669"/>
    <property type="project" value="InterPro"/>
</dbReference>
<dbReference type="InterPro" id="IPR031467">
    <property type="entry name" value="Aep1"/>
</dbReference>
<dbReference type="Pfam" id="PF17049">
    <property type="entry name" value="AEP1"/>
    <property type="match status" value="1"/>
</dbReference>
<evidence type="ECO:0000250" key="1"/>
<evidence type="ECO:0000255" key="2"/>
<evidence type="ECO:0000305" key="3"/>
<accession>B3LLV7</accession>
<name>AEP1_YEAS1</name>
<gene>
    <name type="primary">AEP1</name>
    <name type="synonym">NCA1</name>
    <name type="ORF">SCRG_01956</name>
</gene>
<proteinExistence type="inferred from homology"/>
<keyword id="KW-0496">Mitochondrion</keyword>
<keyword id="KW-0809">Transit peptide</keyword>
<keyword id="KW-0810">Translation regulation</keyword>
<sequence length="518" mass="59668">MITTVQEINKWRNLCFIRMQSRKWYPVLKKTPLVADGRKIIKHADKVPHPGEIIHPFYQPTAIEQFTACATEYNPSLLDGKKIAPSLIKHPVSLKTILVDSKLKFDDIRGVNRWLMEFVARRQHQRNIVLTPASKSVRSFHVLHLSSTDIAKLRGLENVLSEIENTNDLQSRVESVNNELQNIFDRDSKQTRLFCEDILAYLIKNYGNSTENLILLINVTEMQLFSRLDQMKAMNIILYHILCKVEANENPPYSPTLVTALENLLAAINNRFFPGRCENSLHPIVIEQLLSYFIITGNLNESKNFLGHLIKKGILPEATIINRYLEAIDVHFDKSTKIFDIRSKFAFIADLAPIIENYGTIDLFKFLIPMCRHFDELCSLLNIIRKSNNAKQAVDSTLPIFIKKVLTFTKDPMINSGNLSTVFNIVSPIYGQNVPSEFVEKFILSFALQGNYTMMAHMIDTYKIKLSHKYQLQIIRALKNSERNHALKNTGAVGYNKEFKKYFIEKYLNCTEREALRP</sequence>
<reference key="1">
    <citation type="submission" date="2005-03" db="EMBL/GenBank/DDBJ databases">
        <title>Annotation of the Saccharomyces cerevisiae RM11-1a genome.</title>
        <authorList>
            <consortium name="The Broad Institute Genome Sequencing Platform"/>
            <person name="Birren B.W."/>
            <person name="Lander E.S."/>
            <person name="Galagan J.E."/>
            <person name="Nusbaum C."/>
            <person name="Devon K."/>
            <person name="Cuomo C."/>
            <person name="Jaffe D.B."/>
            <person name="Butler J."/>
            <person name="Alvarez P."/>
            <person name="Gnerre S."/>
            <person name="Grabherr M."/>
            <person name="Kleber M."/>
            <person name="Mauceli E.W."/>
            <person name="Brockman W."/>
            <person name="MacCallum I.A."/>
            <person name="Rounsley S."/>
            <person name="Young S.K."/>
            <person name="LaButti K."/>
            <person name="Pushparaj V."/>
            <person name="DeCaprio D."/>
            <person name="Crawford M."/>
            <person name="Koehrsen M."/>
            <person name="Engels R."/>
            <person name="Montgomery P."/>
            <person name="Pearson M."/>
            <person name="Howarth C."/>
            <person name="Larson L."/>
            <person name="Luoma S."/>
            <person name="White J."/>
            <person name="O'Leary S."/>
            <person name="Kodira C.D."/>
            <person name="Zeng Q."/>
            <person name="Yandava C."/>
            <person name="Alvarado L."/>
            <person name="Pratt S."/>
            <person name="Kruglyak L."/>
        </authorList>
    </citation>
    <scope>NUCLEOTIDE SEQUENCE [LARGE SCALE GENOMIC DNA]</scope>
    <source>
        <strain>RM11-1a</strain>
    </source>
</reference>
<comment type="function">
    <text evidence="1">Required for translation of the mitochondrial OLI1 transcript encoding subunit 9 of mitochondrial ATP synthase.</text>
</comment>
<comment type="subcellular location">
    <subcellularLocation>
        <location evidence="1">Mitochondrion</location>
    </subcellularLocation>
</comment>
<comment type="similarity">
    <text evidence="3">Belongs to the AEP1 family.</text>
</comment>
<organism>
    <name type="scientific">Saccharomyces cerevisiae (strain RM11-1a)</name>
    <name type="common">Baker's yeast</name>
    <dbReference type="NCBI Taxonomy" id="285006"/>
    <lineage>
        <taxon>Eukaryota</taxon>
        <taxon>Fungi</taxon>
        <taxon>Dikarya</taxon>
        <taxon>Ascomycota</taxon>
        <taxon>Saccharomycotina</taxon>
        <taxon>Saccharomycetes</taxon>
        <taxon>Saccharomycetales</taxon>
        <taxon>Saccharomycetaceae</taxon>
        <taxon>Saccharomyces</taxon>
    </lineage>
</organism>
<feature type="transit peptide" description="Mitochondrion" evidence="2">
    <location>
        <begin position="1"/>
        <end position="19"/>
    </location>
</feature>
<feature type="chain" id="PRO_0000405612" description="ATPase expression protein 1, mitochondrial">
    <location>
        <begin position="20"/>
        <end position="518"/>
    </location>
</feature>
<protein>
    <recommendedName>
        <fullName>ATPase expression protein 1, mitochondrial</fullName>
    </recommendedName>
    <alternativeName>
        <fullName>Nuclear control of ATPase messenger RNA expression protein 1</fullName>
    </alternativeName>
</protein>